<name>HEMH_PICP2</name>
<proteinExistence type="inferred from homology"/>
<comment type="function">
    <text evidence="1">Catalyzes the ferrous insertion into protoporphyrin IX.</text>
</comment>
<comment type="catalytic activity">
    <reaction evidence="1">
        <text>heme b + 2 H(+) = protoporphyrin IX + Fe(2+)</text>
        <dbReference type="Rhea" id="RHEA:22584"/>
        <dbReference type="ChEBI" id="CHEBI:15378"/>
        <dbReference type="ChEBI" id="CHEBI:29033"/>
        <dbReference type="ChEBI" id="CHEBI:57306"/>
        <dbReference type="ChEBI" id="CHEBI:60344"/>
        <dbReference type="EC" id="4.98.1.1"/>
    </reaction>
</comment>
<comment type="pathway">
    <text evidence="1">Porphyrin-containing compound metabolism; protoheme biosynthesis; protoheme from protoporphyrin-IX: step 1/1.</text>
</comment>
<comment type="subcellular location">
    <subcellularLocation>
        <location evidence="1">Cytoplasm</location>
    </subcellularLocation>
</comment>
<comment type="similarity">
    <text evidence="1">Belongs to the ferrochelatase family.</text>
</comment>
<evidence type="ECO:0000255" key="1">
    <source>
        <dbReference type="HAMAP-Rule" id="MF_00323"/>
    </source>
</evidence>
<organism>
    <name type="scientific">Picosynechococcus sp. (strain ATCC 27264 / PCC 7002 / PR-6)</name>
    <name type="common">Agmenellum quadruplicatum</name>
    <dbReference type="NCBI Taxonomy" id="32049"/>
    <lineage>
        <taxon>Bacteria</taxon>
        <taxon>Bacillati</taxon>
        <taxon>Cyanobacteriota</taxon>
        <taxon>Cyanophyceae</taxon>
        <taxon>Oscillatoriophycideae</taxon>
        <taxon>Chroococcales</taxon>
        <taxon>Geminocystaceae</taxon>
        <taxon>Picosynechococcus</taxon>
    </lineage>
</organism>
<reference key="1">
    <citation type="submission" date="2008-02" db="EMBL/GenBank/DDBJ databases">
        <title>Complete sequence of Synechococcus sp. PCC 7002.</title>
        <authorList>
            <person name="Li T."/>
            <person name="Zhao J."/>
            <person name="Zhao C."/>
            <person name="Liu Z."/>
            <person name="Zhao F."/>
            <person name="Marquardt J."/>
            <person name="Nomura C.T."/>
            <person name="Persson S."/>
            <person name="Detter J.C."/>
            <person name="Richardson P.M."/>
            <person name="Lanz C."/>
            <person name="Schuster S.C."/>
            <person name="Wang J."/>
            <person name="Li S."/>
            <person name="Huang X."/>
            <person name="Cai T."/>
            <person name="Yu Z."/>
            <person name="Luo J."/>
            <person name="Zhao J."/>
            <person name="Bryant D.A."/>
        </authorList>
    </citation>
    <scope>NUCLEOTIDE SEQUENCE [LARGE SCALE GENOMIC DNA]</scope>
    <source>
        <strain>ATCC 27264 / PCC 7002 / PR-6</strain>
    </source>
</reference>
<accession>B1XL79</accession>
<dbReference type="EC" id="4.98.1.1" evidence="1"/>
<dbReference type="EMBL" id="CP000951">
    <property type="protein sequence ID" value="ACB00566.1"/>
    <property type="molecule type" value="Genomic_DNA"/>
</dbReference>
<dbReference type="RefSeq" id="WP_012308184.1">
    <property type="nucleotide sequence ID" value="NZ_JAHHPU010000003.1"/>
</dbReference>
<dbReference type="SMR" id="B1XL79"/>
<dbReference type="STRING" id="32049.SYNPCC7002_A2589"/>
<dbReference type="KEGG" id="syp:SYNPCC7002_A2589"/>
<dbReference type="eggNOG" id="COG0276">
    <property type="taxonomic scope" value="Bacteria"/>
</dbReference>
<dbReference type="HOGENOM" id="CLU_018884_4_1_3"/>
<dbReference type="UniPathway" id="UPA00252">
    <property type="reaction ID" value="UER00325"/>
</dbReference>
<dbReference type="Proteomes" id="UP000001688">
    <property type="component" value="Chromosome"/>
</dbReference>
<dbReference type="GO" id="GO:0005737">
    <property type="term" value="C:cytoplasm"/>
    <property type="evidence" value="ECO:0007669"/>
    <property type="project" value="UniProtKB-SubCell"/>
</dbReference>
<dbReference type="GO" id="GO:0004325">
    <property type="term" value="F:ferrochelatase activity"/>
    <property type="evidence" value="ECO:0007669"/>
    <property type="project" value="UniProtKB-UniRule"/>
</dbReference>
<dbReference type="GO" id="GO:0046872">
    <property type="term" value="F:metal ion binding"/>
    <property type="evidence" value="ECO:0007669"/>
    <property type="project" value="UniProtKB-KW"/>
</dbReference>
<dbReference type="GO" id="GO:0006783">
    <property type="term" value="P:heme biosynthetic process"/>
    <property type="evidence" value="ECO:0007669"/>
    <property type="project" value="UniProtKB-UniRule"/>
</dbReference>
<dbReference type="CDD" id="cd00419">
    <property type="entry name" value="Ferrochelatase_C"/>
    <property type="match status" value="1"/>
</dbReference>
<dbReference type="CDD" id="cd03411">
    <property type="entry name" value="Ferrochelatase_N"/>
    <property type="match status" value="1"/>
</dbReference>
<dbReference type="FunFam" id="3.40.50.1400:FF:000006">
    <property type="entry name" value="Ferrochelatase"/>
    <property type="match status" value="1"/>
</dbReference>
<dbReference type="Gene3D" id="3.40.50.1400">
    <property type="match status" value="2"/>
</dbReference>
<dbReference type="HAMAP" id="MF_00323">
    <property type="entry name" value="Ferrochelatase"/>
    <property type="match status" value="1"/>
</dbReference>
<dbReference type="InterPro" id="IPR001015">
    <property type="entry name" value="Ferrochelatase"/>
</dbReference>
<dbReference type="InterPro" id="IPR019772">
    <property type="entry name" value="Ferrochelatase_AS"/>
</dbReference>
<dbReference type="InterPro" id="IPR033644">
    <property type="entry name" value="Ferrochelatase_C"/>
</dbReference>
<dbReference type="InterPro" id="IPR033659">
    <property type="entry name" value="Ferrochelatase_N"/>
</dbReference>
<dbReference type="NCBIfam" id="TIGR00109">
    <property type="entry name" value="hemH"/>
    <property type="match status" value="1"/>
</dbReference>
<dbReference type="PANTHER" id="PTHR11108">
    <property type="entry name" value="FERROCHELATASE"/>
    <property type="match status" value="1"/>
</dbReference>
<dbReference type="PANTHER" id="PTHR11108:SF1">
    <property type="entry name" value="FERROCHELATASE, MITOCHONDRIAL"/>
    <property type="match status" value="1"/>
</dbReference>
<dbReference type="Pfam" id="PF00762">
    <property type="entry name" value="Ferrochelatase"/>
    <property type="match status" value="1"/>
</dbReference>
<dbReference type="SUPFAM" id="SSF53800">
    <property type="entry name" value="Chelatase"/>
    <property type="match status" value="1"/>
</dbReference>
<dbReference type="SUPFAM" id="SSF103511">
    <property type="entry name" value="Chlorophyll a-b binding protein"/>
    <property type="match status" value="1"/>
</dbReference>
<dbReference type="PROSITE" id="PS00534">
    <property type="entry name" value="FERROCHELATASE"/>
    <property type="match status" value="1"/>
</dbReference>
<feature type="chain" id="PRO_1000116087" description="Ferrochelatase">
    <location>
        <begin position="1"/>
        <end position="386"/>
    </location>
</feature>
<feature type="binding site" evidence="1">
    <location>
        <position position="196"/>
    </location>
    <ligand>
        <name>Fe cation</name>
        <dbReference type="ChEBI" id="CHEBI:24875"/>
    </ligand>
</feature>
<feature type="binding site" evidence="1">
    <location>
        <position position="277"/>
    </location>
    <ligand>
        <name>Fe cation</name>
        <dbReference type="ChEBI" id="CHEBI:24875"/>
    </ligand>
</feature>
<keyword id="KW-0963">Cytoplasm</keyword>
<keyword id="KW-0350">Heme biosynthesis</keyword>
<keyword id="KW-0408">Iron</keyword>
<keyword id="KW-0456">Lyase</keyword>
<keyword id="KW-0479">Metal-binding</keyword>
<keyword id="KW-0627">Porphyrin biosynthesis</keyword>
<keyword id="KW-1185">Reference proteome</keyword>
<sequence>MGRVGVLLLNLGGPDKLEDVRPFLFNLFADPEIIRLPAPWMQKPLAWLISTLRAGKSQENYKEIGGGSPLRQITEAQGTALAQKLAEWGQEVKVYVGMRYWHPFTEEAIAEIKKDDLDQLVVLPLYPQFSISTSGSSFRVLEEMWRTDKDLNQLDYTLIPSWYDHPQYIAAMVDLIRQELDQFDNPDQAHIFFSAHGVPQSYVEEAGDPYQREIEECTKLIMEALGRPNDYTLAYQSRVGPVEWLQPYTEDSLIALGEKGVKDLVVIPISFVSEHIETLQEIDIEYREVAEEAGIENFRRVPALNTHPLFIESLANLVTDSLEQCPRTFGQVTHPKENMKMYPQELSWGMNTSAEVLNGRLAMIGFLALLLELISGQGPLHFVGIM</sequence>
<gene>
    <name evidence="1" type="primary">hemH</name>
    <name type="ordered locus">SYNPCC7002_A2589</name>
</gene>
<protein>
    <recommendedName>
        <fullName evidence="1">Ferrochelatase</fullName>
        <ecNumber evidence="1">4.98.1.1</ecNumber>
    </recommendedName>
    <alternativeName>
        <fullName evidence="1">Heme synthase</fullName>
    </alternativeName>
    <alternativeName>
        <fullName evidence="1">Protoheme ferro-lyase</fullName>
    </alternativeName>
</protein>